<name>GERQC_BACCE</name>
<feature type="signal peptide" evidence="1">
    <location>
        <begin position="1"/>
        <end position="16"/>
    </location>
</feature>
<feature type="chain" id="PRO_0000425707" description="Spore germination protein GerQC">
    <location>
        <begin position="17"/>
        <end position="359"/>
    </location>
</feature>
<feature type="lipid moiety-binding region" description="N-palmitoyl cysteine" evidence="1">
    <location>
        <position position="17"/>
    </location>
</feature>
<feature type="lipid moiety-binding region" description="S-diacylglycerol cysteine" evidence="1">
    <location>
        <position position="17"/>
    </location>
</feature>
<comment type="function">
    <text evidence="2">Required for the germination response to inosine. Has no role in L-alanine germination.</text>
</comment>
<comment type="subcellular location">
    <subcellularLocation>
        <location evidence="3">Membrane</location>
        <topology evidence="1">Lipid-anchor</topology>
    </subcellularLocation>
</comment>
<comment type="similarity">
    <text evidence="3">Belongs to the GerABKC lipoprotein family.</text>
</comment>
<evidence type="ECO:0000255" key="1">
    <source>
        <dbReference type="PROSITE-ProRule" id="PRU00303"/>
    </source>
</evidence>
<evidence type="ECO:0000269" key="2">
    <source>
    </source>
</evidence>
<evidence type="ECO:0000305" key="3"/>
<sequence>MKRWILFLILSVFLIGCAKTKIVDDIDLVQVAAYDTEAEGKLKGTFAISAYKGGGEGETKIYSASGQTGREVLARASEKSSGPLELGQLRVIIFNEKIIEKGMQEILETLNRNPSVGNAIYLAITNVKGESLLKGNYSKEKEIASYLSSLLEQNMNNGTQPKTNFFMFLNQLDDDARDSYLPMISKKGNVLELNGIALFKRCKMVDKVNPKDLFVFKLLTDNFKQGTYQFKLPGSSNTYATIENIKARTKYKMEGNSKHPFVNAHIQVKAEIQEFTKTKNLDNPKEIKKLEKIMGKEIEKKATTLIKRFIKKDTDPIGLRKLGRTHVRKWNSQEWEESYKHLRFRVTADVKVTQSGVTE</sequence>
<keyword id="KW-0309">Germination</keyword>
<keyword id="KW-0449">Lipoprotein</keyword>
<keyword id="KW-0472">Membrane</keyword>
<keyword id="KW-0564">Palmitate</keyword>
<keyword id="KW-0732">Signal</keyword>
<proteinExistence type="inferred from homology"/>
<accession>Q93LK7</accession>
<organism>
    <name type="scientific">Bacillus cereus</name>
    <dbReference type="NCBI Taxonomy" id="1396"/>
    <lineage>
        <taxon>Bacteria</taxon>
        <taxon>Bacillati</taxon>
        <taxon>Bacillota</taxon>
        <taxon>Bacilli</taxon>
        <taxon>Bacillales</taxon>
        <taxon>Bacillaceae</taxon>
        <taxon>Bacillus</taxon>
        <taxon>Bacillus cereus group</taxon>
    </lineage>
</organism>
<protein>
    <recommendedName>
        <fullName>Spore germination protein GerQC</fullName>
    </recommendedName>
</protein>
<dbReference type="EMBL" id="AY037930">
    <property type="protein sequence ID" value="AAK63176.1"/>
    <property type="molecule type" value="Genomic_DNA"/>
</dbReference>
<dbReference type="RefSeq" id="WP_000832864.1">
    <property type="nucleotide sequence ID" value="NZ_VEIQ01000003.1"/>
</dbReference>
<dbReference type="SMR" id="Q93LK7"/>
<dbReference type="PATRIC" id="fig|1396.540.peg.3335"/>
<dbReference type="GO" id="GO:0016020">
    <property type="term" value="C:membrane"/>
    <property type="evidence" value="ECO:0007669"/>
    <property type="project" value="UniProtKB-SubCell"/>
</dbReference>
<dbReference type="GO" id="GO:0009847">
    <property type="term" value="P:spore germination"/>
    <property type="evidence" value="ECO:0007669"/>
    <property type="project" value="InterPro"/>
</dbReference>
<dbReference type="Gene3D" id="3.30.300.210">
    <property type="entry name" value="Nutrient germinant receptor protein C, domain 3"/>
    <property type="match status" value="1"/>
</dbReference>
<dbReference type="InterPro" id="IPR008844">
    <property type="entry name" value="Spore_GerAC-like"/>
</dbReference>
<dbReference type="InterPro" id="IPR046953">
    <property type="entry name" value="Spore_GerAC-like_C"/>
</dbReference>
<dbReference type="InterPro" id="IPR038501">
    <property type="entry name" value="Spore_GerAC_C_sf"/>
</dbReference>
<dbReference type="NCBIfam" id="TIGR02887">
    <property type="entry name" value="spore_ger_x_C"/>
    <property type="match status" value="1"/>
</dbReference>
<dbReference type="PANTHER" id="PTHR35789">
    <property type="entry name" value="SPORE GERMINATION PROTEIN B3"/>
    <property type="match status" value="1"/>
</dbReference>
<dbReference type="PANTHER" id="PTHR35789:SF1">
    <property type="entry name" value="SPORE GERMINATION PROTEIN B3"/>
    <property type="match status" value="1"/>
</dbReference>
<dbReference type="Pfam" id="PF05504">
    <property type="entry name" value="Spore_GerAC"/>
    <property type="match status" value="1"/>
</dbReference>
<dbReference type="Pfam" id="PF25198">
    <property type="entry name" value="Spore_GerAC_N"/>
    <property type="match status" value="1"/>
</dbReference>
<dbReference type="PROSITE" id="PS51257">
    <property type="entry name" value="PROKAR_LIPOPROTEIN"/>
    <property type="match status" value="1"/>
</dbReference>
<gene>
    <name type="primary">gerQC</name>
</gene>
<reference key="1">
    <citation type="journal article" date="2002" name="Microbiology">
        <title>Germination of Bacillus cereus spores in response to L-alanine and to inosine: the roles of gerL and gerQ operons.</title>
        <authorList>
            <person name="Barlass P.J."/>
            <person name="Houston C.W."/>
            <person name="Clements M.O."/>
            <person name="Moir A."/>
        </authorList>
    </citation>
    <scope>NUCLEOTIDE SEQUENCE [GENOMIC DNA]</scope>
    <scope>FUNCTION</scope>
    <source>
        <strain>ATCC 10876 / DSM 9378 / NRRL B-569</strain>
    </source>
</reference>